<gene>
    <name evidence="1" type="primary">trmD</name>
    <name type="ordered locus">SAR1216</name>
</gene>
<accession>Q6GHJ5</accession>
<protein>
    <recommendedName>
        <fullName evidence="1">tRNA (guanine-N(1)-)-methyltransferase</fullName>
        <ecNumber evidence="1">2.1.1.228</ecNumber>
    </recommendedName>
    <alternativeName>
        <fullName evidence="1">M1G-methyltransferase</fullName>
    </alternativeName>
    <alternativeName>
        <fullName evidence="1">tRNA [GM37] methyltransferase</fullName>
    </alternativeName>
</protein>
<sequence length="245" mass="28026">MKIDYLTLFPEMFDGVLNHSIMKRAQENNKLQINTVNFRDYAINKHNQVDDYPYGGGQGMVLKPEPVFNAMEDLDVTEQARVILMCPQGEPFSHQKAVELSKADHIVFICGHYEGYDERIRTHLVTDEISMGDYVLTGGELPAMTMTDAIVRLIPGVLGNEQSHQDDSFSDGLLEFPQYTRPREFKGLTVPDVLLSGNHANIDAWRHEQKLIRTYNKRPDLIEKYPLTNADKQILERYKIGLKKG</sequence>
<feature type="chain" id="PRO_0000060457" description="tRNA (guanine-N(1)-)-methyltransferase">
    <location>
        <begin position="1"/>
        <end position="245"/>
    </location>
</feature>
<feature type="binding site" evidence="1">
    <location>
        <position position="111"/>
    </location>
    <ligand>
        <name>S-adenosyl-L-methionine</name>
        <dbReference type="ChEBI" id="CHEBI:59789"/>
    </ligand>
</feature>
<feature type="binding site" evidence="1">
    <location>
        <begin position="131"/>
        <end position="136"/>
    </location>
    <ligand>
        <name>S-adenosyl-L-methionine</name>
        <dbReference type="ChEBI" id="CHEBI:59789"/>
    </ligand>
</feature>
<feature type="strand" evidence="2">
    <location>
        <begin position="2"/>
        <end position="8"/>
    </location>
</feature>
<feature type="helix" evidence="2">
    <location>
        <begin position="10"/>
        <end position="13"/>
    </location>
</feature>
<feature type="helix" evidence="2">
    <location>
        <begin position="14"/>
        <end position="19"/>
    </location>
</feature>
<feature type="turn" evidence="2">
    <location>
        <begin position="20"/>
        <end position="22"/>
    </location>
</feature>
<feature type="helix" evidence="2">
    <location>
        <begin position="23"/>
        <end position="27"/>
    </location>
</feature>
<feature type="strand" evidence="2">
    <location>
        <begin position="32"/>
        <end position="37"/>
    </location>
</feature>
<feature type="helix" evidence="2">
    <location>
        <begin position="38"/>
        <end position="41"/>
    </location>
</feature>
<feature type="strand" evidence="2">
    <location>
        <begin position="49"/>
        <end position="51"/>
    </location>
</feature>
<feature type="helix" evidence="2">
    <location>
        <begin position="64"/>
        <end position="73"/>
    </location>
</feature>
<feature type="strand" evidence="2">
    <location>
        <begin position="80"/>
        <end position="85"/>
    </location>
</feature>
<feature type="strand" evidence="2">
    <location>
        <begin position="87"/>
        <end position="91"/>
    </location>
</feature>
<feature type="helix" evidence="2">
    <location>
        <begin position="94"/>
        <end position="100"/>
    </location>
</feature>
<feature type="strand" evidence="2">
    <location>
        <begin position="104"/>
        <end position="109"/>
    </location>
</feature>
<feature type="helix" evidence="2">
    <location>
        <begin position="118"/>
        <end position="123"/>
    </location>
</feature>
<feature type="strand" evidence="2">
    <location>
        <begin position="127"/>
        <end position="134"/>
    </location>
</feature>
<feature type="helix" evidence="2">
    <location>
        <begin position="140"/>
        <end position="151"/>
    </location>
</feature>
<feature type="strand" evidence="2">
    <location>
        <begin position="183"/>
        <end position="185"/>
    </location>
</feature>
<feature type="helix" evidence="2">
    <location>
        <begin position="192"/>
        <end position="195"/>
    </location>
</feature>
<feature type="helix" evidence="2">
    <location>
        <begin position="199"/>
        <end position="217"/>
    </location>
</feature>
<feature type="helix" evidence="2">
    <location>
        <begin position="219"/>
        <end position="223"/>
    </location>
</feature>
<feature type="helix" evidence="2">
    <location>
        <begin position="229"/>
        <end position="242"/>
    </location>
</feature>
<name>TRMD_STAAR</name>
<proteinExistence type="evidence at protein level"/>
<organism>
    <name type="scientific">Staphylococcus aureus (strain MRSA252)</name>
    <dbReference type="NCBI Taxonomy" id="282458"/>
    <lineage>
        <taxon>Bacteria</taxon>
        <taxon>Bacillati</taxon>
        <taxon>Bacillota</taxon>
        <taxon>Bacilli</taxon>
        <taxon>Bacillales</taxon>
        <taxon>Staphylococcaceae</taxon>
        <taxon>Staphylococcus</taxon>
    </lineage>
</organism>
<dbReference type="EC" id="2.1.1.228" evidence="1"/>
<dbReference type="EMBL" id="BX571856">
    <property type="protein sequence ID" value="CAG40218.1"/>
    <property type="molecule type" value="Genomic_DNA"/>
</dbReference>
<dbReference type="RefSeq" id="WP_000687323.1">
    <property type="nucleotide sequence ID" value="NC_002952.2"/>
</dbReference>
<dbReference type="PDB" id="3KY7">
    <property type="method" value="X-ray"/>
    <property type="resolution" value="2.35 A"/>
    <property type="chains" value="A=1-245"/>
</dbReference>
<dbReference type="PDBsum" id="3KY7"/>
<dbReference type="SMR" id="Q6GHJ5"/>
<dbReference type="KEGG" id="sar:SAR1216"/>
<dbReference type="HOGENOM" id="CLU_047363_0_1_9"/>
<dbReference type="EvolutionaryTrace" id="Q6GHJ5"/>
<dbReference type="Proteomes" id="UP000000596">
    <property type="component" value="Chromosome"/>
</dbReference>
<dbReference type="GO" id="GO:0005829">
    <property type="term" value="C:cytosol"/>
    <property type="evidence" value="ECO:0007669"/>
    <property type="project" value="TreeGrafter"/>
</dbReference>
<dbReference type="GO" id="GO:0052906">
    <property type="term" value="F:tRNA (guanine(37)-N1)-methyltransferase activity"/>
    <property type="evidence" value="ECO:0007669"/>
    <property type="project" value="UniProtKB-UniRule"/>
</dbReference>
<dbReference type="GO" id="GO:0002939">
    <property type="term" value="P:tRNA N1-guanine methylation"/>
    <property type="evidence" value="ECO:0007669"/>
    <property type="project" value="TreeGrafter"/>
</dbReference>
<dbReference type="CDD" id="cd18080">
    <property type="entry name" value="TrmD-like"/>
    <property type="match status" value="1"/>
</dbReference>
<dbReference type="FunFam" id="1.10.1270.20:FF:000001">
    <property type="entry name" value="tRNA (guanine-N(1)-)-methyltransferase"/>
    <property type="match status" value="1"/>
</dbReference>
<dbReference type="FunFam" id="3.40.1280.10:FF:000001">
    <property type="entry name" value="tRNA (guanine-N(1)-)-methyltransferase"/>
    <property type="match status" value="1"/>
</dbReference>
<dbReference type="Gene3D" id="3.40.1280.10">
    <property type="match status" value="1"/>
</dbReference>
<dbReference type="Gene3D" id="1.10.1270.20">
    <property type="entry name" value="tRNA(m1g37)methyltransferase, domain 2"/>
    <property type="match status" value="1"/>
</dbReference>
<dbReference type="HAMAP" id="MF_00605">
    <property type="entry name" value="TrmD"/>
    <property type="match status" value="1"/>
</dbReference>
<dbReference type="InterPro" id="IPR029028">
    <property type="entry name" value="Alpha/beta_knot_MTases"/>
</dbReference>
<dbReference type="InterPro" id="IPR023148">
    <property type="entry name" value="tRNA_m1G_MeTrfase_C_sf"/>
</dbReference>
<dbReference type="InterPro" id="IPR002649">
    <property type="entry name" value="tRNA_m1G_MeTrfase_TrmD"/>
</dbReference>
<dbReference type="InterPro" id="IPR029026">
    <property type="entry name" value="tRNA_m1G_MTases_N"/>
</dbReference>
<dbReference type="InterPro" id="IPR016009">
    <property type="entry name" value="tRNA_MeTrfase_TRMD/TRM10"/>
</dbReference>
<dbReference type="NCBIfam" id="NF000648">
    <property type="entry name" value="PRK00026.1"/>
    <property type="match status" value="1"/>
</dbReference>
<dbReference type="NCBIfam" id="TIGR00088">
    <property type="entry name" value="trmD"/>
    <property type="match status" value="1"/>
</dbReference>
<dbReference type="PANTHER" id="PTHR46417">
    <property type="entry name" value="TRNA (GUANINE-N(1)-)-METHYLTRANSFERASE"/>
    <property type="match status" value="1"/>
</dbReference>
<dbReference type="PANTHER" id="PTHR46417:SF1">
    <property type="entry name" value="TRNA (GUANINE-N(1)-)-METHYLTRANSFERASE"/>
    <property type="match status" value="1"/>
</dbReference>
<dbReference type="Pfam" id="PF01746">
    <property type="entry name" value="tRNA_m1G_MT"/>
    <property type="match status" value="1"/>
</dbReference>
<dbReference type="PIRSF" id="PIRSF000386">
    <property type="entry name" value="tRNA_mtase"/>
    <property type="match status" value="1"/>
</dbReference>
<dbReference type="SUPFAM" id="SSF75217">
    <property type="entry name" value="alpha/beta knot"/>
    <property type="match status" value="1"/>
</dbReference>
<evidence type="ECO:0000255" key="1">
    <source>
        <dbReference type="HAMAP-Rule" id="MF_00605"/>
    </source>
</evidence>
<evidence type="ECO:0007829" key="2">
    <source>
        <dbReference type="PDB" id="3KY7"/>
    </source>
</evidence>
<comment type="function">
    <text evidence="1">Specifically methylates guanosine-37 in various tRNAs.</text>
</comment>
<comment type="catalytic activity">
    <reaction evidence="1">
        <text>guanosine(37) in tRNA + S-adenosyl-L-methionine = N(1)-methylguanosine(37) in tRNA + S-adenosyl-L-homocysteine + H(+)</text>
        <dbReference type="Rhea" id="RHEA:36899"/>
        <dbReference type="Rhea" id="RHEA-COMP:10145"/>
        <dbReference type="Rhea" id="RHEA-COMP:10147"/>
        <dbReference type="ChEBI" id="CHEBI:15378"/>
        <dbReference type="ChEBI" id="CHEBI:57856"/>
        <dbReference type="ChEBI" id="CHEBI:59789"/>
        <dbReference type="ChEBI" id="CHEBI:73542"/>
        <dbReference type="ChEBI" id="CHEBI:74269"/>
        <dbReference type="EC" id="2.1.1.228"/>
    </reaction>
</comment>
<comment type="subunit">
    <text evidence="1">Homodimer.</text>
</comment>
<comment type="subcellular location">
    <subcellularLocation>
        <location evidence="1">Cytoplasm</location>
    </subcellularLocation>
</comment>
<comment type="similarity">
    <text evidence="1">Belongs to the RNA methyltransferase TrmD family.</text>
</comment>
<keyword id="KW-0002">3D-structure</keyword>
<keyword id="KW-0963">Cytoplasm</keyword>
<keyword id="KW-0489">Methyltransferase</keyword>
<keyword id="KW-0949">S-adenosyl-L-methionine</keyword>
<keyword id="KW-0808">Transferase</keyword>
<keyword id="KW-0819">tRNA processing</keyword>
<reference key="1">
    <citation type="journal article" date="2004" name="Proc. Natl. Acad. Sci. U.S.A.">
        <title>Complete genomes of two clinical Staphylococcus aureus strains: evidence for the rapid evolution of virulence and drug resistance.</title>
        <authorList>
            <person name="Holden M.T.G."/>
            <person name="Feil E.J."/>
            <person name="Lindsay J.A."/>
            <person name="Peacock S.J."/>
            <person name="Day N.P.J."/>
            <person name="Enright M.C."/>
            <person name="Foster T.J."/>
            <person name="Moore C.E."/>
            <person name="Hurst L."/>
            <person name="Atkin R."/>
            <person name="Barron A."/>
            <person name="Bason N."/>
            <person name="Bentley S.D."/>
            <person name="Chillingworth C."/>
            <person name="Chillingworth T."/>
            <person name="Churcher C."/>
            <person name="Clark L."/>
            <person name="Corton C."/>
            <person name="Cronin A."/>
            <person name="Doggett J."/>
            <person name="Dowd L."/>
            <person name="Feltwell T."/>
            <person name="Hance Z."/>
            <person name="Harris B."/>
            <person name="Hauser H."/>
            <person name="Holroyd S."/>
            <person name="Jagels K."/>
            <person name="James K.D."/>
            <person name="Lennard N."/>
            <person name="Line A."/>
            <person name="Mayes R."/>
            <person name="Moule S."/>
            <person name="Mungall K."/>
            <person name="Ormond D."/>
            <person name="Quail M.A."/>
            <person name="Rabbinowitsch E."/>
            <person name="Rutherford K.M."/>
            <person name="Sanders M."/>
            <person name="Sharp S."/>
            <person name="Simmonds M."/>
            <person name="Stevens K."/>
            <person name="Whitehead S."/>
            <person name="Barrell B.G."/>
            <person name="Spratt B.G."/>
            <person name="Parkhill J."/>
        </authorList>
    </citation>
    <scope>NUCLEOTIDE SEQUENCE [LARGE SCALE GENOMIC DNA]</scope>
    <source>
        <strain>MRSA252</strain>
    </source>
</reference>